<reference key="1">
    <citation type="journal article" date="2003" name="Nature">
        <title>The genome sequence of the filamentous fungus Neurospora crassa.</title>
        <authorList>
            <person name="Galagan J.E."/>
            <person name="Calvo S.E."/>
            <person name="Borkovich K.A."/>
            <person name="Selker E.U."/>
            <person name="Read N.D."/>
            <person name="Jaffe D.B."/>
            <person name="FitzHugh W."/>
            <person name="Ma L.-J."/>
            <person name="Smirnov S."/>
            <person name="Purcell S."/>
            <person name="Rehman B."/>
            <person name="Elkins T."/>
            <person name="Engels R."/>
            <person name="Wang S."/>
            <person name="Nielsen C.B."/>
            <person name="Butler J."/>
            <person name="Endrizzi M."/>
            <person name="Qui D."/>
            <person name="Ianakiev P."/>
            <person name="Bell-Pedersen D."/>
            <person name="Nelson M.A."/>
            <person name="Werner-Washburne M."/>
            <person name="Selitrennikoff C.P."/>
            <person name="Kinsey J.A."/>
            <person name="Braun E.L."/>
            <person name="Zelter A."/>
            <person name="Schulte U."/>
            <person name="Kothe G.O."/>
            <person name="Jedd G."/>
            <person name="Mewes H.-W."/>
            <person name="Staben C."/>
            <person name="Marcotte E."/>
            <person name="Greenberg D."/>
            <person name="Roy A."/>
            <person name="Foley K."/>
            <person name="Naylor J."/>
            <person name="Stange-Thomann N."/>
            <person name="Barrett R."/>
            <person name="Gnerre S."/>
            <person name="Kamal M."/>
            <person name="Kamvysselis M."/>
            <person name="Mauceli E.W."/>
            <person name="Bielke C."/>
            <person name="Rudd S."/>
            <person name="Frishman D."/>
            <person name="Krystofova S."/>
            <person name="Rasmussen C."/>
            <person name="Metzenberg R.L."/>
            <person name="Perkins D.D."/>
            <person name="Kroken S."/>
            <person name="Cogoni C."/>
            <person name="Macino G."/>
            <person name="Catcheside D.E.A."/>
            <person name="Li W."/>
            <person name="Pratt R.J."/>
            <person name="Osmani S.A."/>
            <person name="DeSouza C.P.C."/>
            <person name="Glass N.L."/>
            <person name="Orbach M.J."/>
            <person name="Berglund J.A."/>
            <person name="Voelker R."/>
            <person name="Yarden O."/>
            <person name="Plamann M."/>
            <person name="Seiler S."/>
            <person name="Dunlap J.C."/>
            <person name="Radford A."/>
            <person name="Aramayo R."/>
            <person name="Natvig D.O."/>
            <person name="Alex L.A."/>
            <person name="Mannhaupt G."/>
            <person name="Ebbole D.J."/>
            <person name="Freitag M."/>
            <person name="Paulsen I."/>
            <person name="Sachs M.S."/>
            <person name="Lander E.S."/>
            <person name="Nusbaum C."/>
            <person name="Birren B.W."/>
        </authorList>
    </citation>
    <scope>NUCLEOTIDE SEQUENCE [LARGE SCALE GENOMIC DNA]</scope>
    <source>
        <strain>ATCC 24698 / 74-OR23-1A / CBS 708.71 / DSM 1257 / FGSC 987</strain>
    </source>
</reference>
<reference evidence="5 6" key="2">
    <citation type="journal article" date="2020" name="Nat. Commun.">
        <title>Analysis of translating mitoribosome reveals functional characteristics of translation in mitochondria of fungi.</title>
        <authorList>
            <person name="Itoh Y."/>
            <person name="Naschberger A."/>
            <person name="Mortezaei N."/>
            <person name="Herrmann J.M."/>
            <person name="Amunts A."/>
        </authorList>
    </citation>
    <scope>STRUCTURE BY ELECTRON MICROSCOPY (2.85 ANGSTROMS)</scope>
</reference>
<accession>Q7SD06</accession>
<gene>
    <name type="primary">rsm23</name>
    <name type="ORF">NCU08120</name>
</gene>
<organism>
    <name type="scientific">Neurospora crassa (strain ATCC 24698 / 74-OR23-1A / CBS 708.71 / DSM 1257 / FGSC 987)</name>
    <dbReference type="NCBI Taxonomy" id="367110"/>
    <lineage>
        <taxon>Eukaryota</taxon>
        <taxon>Fungi</taxon>
        <taxon>Dikarya</taxon>
        <taxon>Ascomycota</taxon>
        <taxon>Pezizomycotina</taxon>
        <taxon>Sordariomycetes</taxon>
        <taxon>Sordariomycetidae</taxon>
        <taxon>Sordariales</taxon>
        <taxon>Sordariaceae</taxon>
        <taxon>Neurospora</taxon>
    </lineage>
</organism>
<comment type="function">
    <text evidence="4">Component of the mitochondrial ribosome (mitoribosome), a dedicated translation machinery responsible for the synthesis of mitochondrial genome-encoded proteins, including at least some of the essential transmembrane subunits of the mitochondrial respiratory chain. The mitoribosomes are attached to the mitochondrial inner membrane and translation products are cotranslationally integrated into the membrane.</text>
</comment>
<comment type="subunit">
    <text evidence="1">Component of the mitochondrial small ribosomal subunit (mt-SSU). Mature N.crassa 74S mitochondrial ribosomes consist of a small (37S) and a large (54S) subunit. The 37S small subunit contains a 16S ribosomal RNA (16S mt-rRNA) and 32 different proteins. The 54S large subunit contains a 23S rRNA (23S mt-rRNA) and 42 different proteins.</text>
</comment>
<comment type="subcellular location">
    <subcellularLocation>
        <location evidence="1">Mitochondrion</location>
    </subcellularLocation>
</comment>
<comment type="similarity">
    <text evidence="3">Belongs to the mitochondrion-specific ribosomal protein mS29 family.</text>
</comment>
<name>RT23_NEUCR</name>
<proteinExistence type="evidence at protein level"/>
<evidence type="ECO:0000269" key="1">
    <source>
    </source>
</evidence>
<evidence type="ECO:0000303" key="2">
    <source>
    </source>
</evidence>
<evidence type="ECO:0000305" key="3"/>
<evidence type="ECO:0000305" key="4">
    <source>
    </source>
</evidence>
<evidence type="ECO:0007744" key="5">
    <source>
        <dbReference type="PDB" id="6YW5"/>
    </source>
</evidence>
<evidence type="ECO:0007744" key="6">
    <source>
        <dbReference type="PDB" id="6YWE"/>
    </source>
</evidence>
<dbReference type="EMBL" id="CM002236">
    <property type="protein sequence ID" value="EAA34643.1"/>
    <property type="molecule type" value="Genomic_DNA"/>
</dbReference>
<dbReference type="RefSeq" id="XP_963879.1">
    <property type="nucleotide sequence ID" value="XM_958786.2"/>
</dbReference>
<dbReference type="PDB" id="6YW5">
    <property type="method" value="EM"/>
    <property type="resolution" value="2.85 A"/>
    <property type="chains" value="XX=1-469"/>
</dbReference>
<dbReference type="PDB" id="6YWE">
    <property type="method" value="EM"/>
    <property type="resolution" value="2.99 A"/>
    <property type="chains" value="XX=1-469"/>
</dbReference>
<dbReference type="PDB" id="6YWX">
    <property type="method" value="EM"/>
    <property type="resolution" value="3.10 A"/>
    <property type="chains" value="XX=1-469"/>
</dbReference>
<dbReference type="PDB" id="6YWY">
    <property type="method" value="EM"/>
    <property type="resolution" value="3.05 A"/>
    <property type="chains" value="XX=1-469"/>
</dbReference>
<dbReference type="PDBsum" id="6YW5"/>
<dbReference type="PDBsum" id="6YWE"/>
<dbReference type="PDBsum" id="6YWX"/>
<dbReference type="PDBsum" id="6YWY"/>
<dbReference type="EMDB" id="EMD-10958"/>
<dbReference type="EMDB" id="EMD-10965"/>
<dbReference type="EMDB" id="EMD-10978"/>
<dbReference type="EMDB" id="EMD-10985"/>
<dbReference type="SMR" id="Q7SD06"/>
<dbReference type="FunCoup" id="Q7SD06">
    <property type="interactions" value="80"/>
</dbReference>
<dbReference type="STRING" id="367110.Q7SD06"/>
<dbReference type="PaxDb" id="5141-EFNCRP00000009632"/>
<dbReference type="EnsemblFungi" id="EAA34643">
    <property type="protein sequence ID" value="EAA34643"/>
    <property type="gene ID" value="NCU08120"/>
</dbReference>
<dbReference type="GeneID" id="3880028"/>
<dbReference type="KEGG" id="ncr:NCU08120"/>
<dbReference type="VEuPathDB" id="FungiDB:NCU08120"/>
<dbReference type="HOGENOM" id="CLU_046315_1_0_1"/>
<dbReference type="InParanoid" id="Q7SD06"/>
<dbReference type="OMA" id="GLAHWMT"/>
<dbReference type="OrthoDB" id="274828at2759"/>
<dbReference type="Proteomes" id="UP000001805">
    <property type="component" value="Chromosome 1, Linkage Group I"/>
</dbReference>
<dbReference type="GO" id="GO:0005763">
    <property type="term" value="C:mitochondrial small ribosomal subunit"/>
    <property type="evidence" value="ECO:0000318"/>
    <property type="project" value="GO_Central"/>
</dbReference>
<dbReference type="GO" id="GO:0003735">
    <property type="term" value="F:structural constituent of ribosome"/>
    <property type="evidence" value="ECO:0000318"/>
    <property type="project" value="GO_Central"/>
</dbReference>
<dbReference type="GO" id="GO:0032543">
    <property type="term" value="P:mitochondrial translation"/>
    <property type="evidence" value="ECO:0007669"/>
    <property type="project" value="InterPro"/>
</dbReference>
<dbReference type="InterPro" id="IPR019368">
    <property type="entry name" value="Ribosomal_mS29"/>
</dbReference>
<dbReference type="InterPro" id="IPR017082">
    <property type="entry name" value="Ribosomal_mS29_fun"/>
</dbReference>
<dbReference type="PANTHER" id="PTHR12810">
    <property type="entry name" value="MITOCHONDRIAL 28S RIBOSOMAL PROTEIN S29"/>
    <property type="match status" value="1"/>
</dbReference>
<dbReference type="PANTHER" id="PTHR12810:SF0">
    <property type="entry name" value="SMALL RIBOSOMAL SUBUNIT PROTEIN MS29"/>
    <property type="match status" value="1"/>
</dbReference>
<dbReference type="Pfam" id="PF10236">
    <property type="entry name" value="DAP3"/>
    <property type="match status" value="1"/>
</dbReference>
<dbReference type="PIRSF" id="PIRSF036996">
    <property type="entry name" value="RSM23"/>
    <property type="match status" value="1"/>
</dbReference>
<sequence length="469" mass="51381">MSASNCLRCLVRPSAVALVPRQMLQVGGGSLTFTATAATKGASSANTGGRQNANRPQKLRFKKTKKKNVVSSGKPPLPGERKAYRKKIVLSNNNALPVPGLETLRPNDLAKQDNVGSVKALPEDVVDALRAMEAFKPTQCWGIFRQPSVLIRQETVDLTKKMKAAGADGKTIRMVIEGNRVTGKSLLLLQAMTHAFMNDWVVLHIPEAQELTTAVTEYAPIENSPLWTQPTYTLKLLQSFKRANEKVLSRMNTVYSHADLPQIIPVNSPLLQLINSAKEADGAWTVFQALWRELNAENVPGRPPILFSLDGLAHIMKVSDYRNPAFELIHSHDLALVKLFTDCLSGATVMPNGGAVLGATTRGNSPRSASMELAIAQREAEKAGEKEVPQRDPYSKKYDDRVEAVMKSVEILRLKGVSKTEARGLLEYWAASGMLKKRVDESMVSEKWTLSGNGVVGEMERASLLTMKA</sequence>
<protein>
    <recommendedName>
        <fullName evidence="2">Small ribosomal subunit protein mS29</fullName>
    </recommendedName>
</protein>
<feature type="chain" id="PRO_0000458559" description="Small ribosomal subunit protein mS29">
    <location>
        <begin position="1"/>
        <end position="469"/>
    </location>
</feature>
<feature type="binding site" evidence="1">
    <location>
        <position position="150"/>
    </location>
    <ligand>
        <name>ATP</name>
        <dbReference type="ChEBI" id="CHEBI:30616"/>
    </ligand>
</feature>
<keyword id="KW-0002">3D-structure</keyword>
<keyword id="KW-0496">Mitochondrion</keyword>
<keyword id="KW-1185">Reference proteome</keyword>
<keyword id="KW-0687">Ribonucleoprotein</keyword>
<keyword id="KW-0689">Ribosomal protein</keyword>
<keyword id="KW-0809">Transit peptide</keyword>